<organism>
    <name type="scientific">Escherichia coli (strain K12 / MC4100 / BW2952)</name>
    <dbReference type="NCBI Taxonomy" id="595496"/>
    <lineage>
        <taxon>Bacteria</taxon>
        <taxon>Pseudomonadati</taxon>
        <taxon>Pseudomonadota</taxon>
        <taxon>Gammaproteobacteria</taxon>
        <taxon>Enterobacterales</taxon>
        <taxon>Enterobacteriaceae</taxon>
        <taxon>Escherichia</taxon>
    </lineage>
</organism>
<accession>C4ZQ41</accession>
<name>LPXK_ECOBW</name>
<comment type="function">
    <text evidence="1">Transfers the gamma-phosphate of ATP to the 4'-position of a tetraacyldisaccharide 1-phosphate intermediate (termed DS-1-P) to form tetraacyldisaccharide 1,4'-bis-phosphate (lipid IVA).</text>
</comment>
<comment type="catalytic activity">
    <reaction evidence="1">
        <text>a lipid A disaccharide + ATP = a lipid IVA + ADP + H(+)</text>
        <dbReference type="Rhea" id="RHEA:67840"/>
        <dbReference type="ChEBI" id="CHEBI:15378"/>
        <dbReference type="ChEBI" id="CHEBI:30616"/>
        <dbReference type="ChEBI" id="CHEBI:176343"/>
        <dbReference type="ChEBI" id="CHEBI:176425"/>
        <dbReference type="ChEBI" id="CHEBI:456216"/>
        <dbReference type="EC" id="2.7.1.130"/>
    </reaction>
</comment>
<comment type="pathway">
    <text evidence="1">Glycolipid biosynthesis; lipid IV(A) biosynthesis; lipid IV(A) from (3R)-3-hydroxytetradecanoyl-[acyl-carrier-protein] and UDP-N-acetyl-alpha-D-glucosamine: step 6/6.</text>
</comment>
<comment type="similarity">
    <text evidence="1">Belongs to the LpxK family.</text>
</comment>
<feature type="chain" id="PRO_1000205967" description="Tetraacyldisaccharide 4'-kinase">
    <location>
        <begin position="1"/>
        <end position="328"/>
    </location>
</feature>
<feature type="binding site" evidence="1">
    <location>
        <begin position="55"/>
        <end position="62"/>
    </location>
    <ligand>
        <name>ATP</name>
        <dbReference type="ChEBI" id="CHEBI:30616"/>
    </ligand>
</feature>
<proteinExistence type="inferred from homology"/>
<gene>
    <name evidence="1" type="primary">lpxK</name>
    <name type="ordered locus">BWG_0767</name>
</gene>
<sequence>MIEKIWSGESPLWRLLLPLSWLYGLVSGAIRLCYKLKLKRAWRAPVPVVVVGNLTAGGNGKTPVVVWLVEQLQQRGIRVGVVSRGYGGKAESYPLLLSADTTTAQAGDEPVLIYQRTDAPVAVSPVRSDAVKAILAQHPDVQIIVTDDGLQHYRLARNVEIVVIDGVRRFGNGWWLPAGPMRERAGRLKSVDAVIVNGGVPRSGEIPMHLLPGQAVNLRTGTRCDVAQLEHVVAMAGIGHPPRFFATLKMCGVQPEKCVPLADHQSLNHADVSALVSAGQTLVMTEKDAVKCRAFAEENWWYLPVDAQLSGDEPAKLLTQLTLLASGN</sequence>
<protein>
    <recommendedName>
        <fullName evidence="1">Tetraacyldisaccharide 4'-kinase</fullName>
        <ecNumber evidence="1">2.7.1.130</ecNumber>
    </recommendedName>
    <alternativeName>
        <fullName evidence="1">Lipid A 4'-kinase</fullName>
    </alternativeName>
</protein>
<keyword id="KW-0067">ATP-binding</keyword>
<keyword id="KW-0418">Kinase</keyword>
<keyword id="KW-0441">Lipid A biosynthesis</keyword>
<keyword id="KW-0444">Lipid biosynthesis</keyword>
<keyword id="KW-0443">Lipid metabolism</keyword>
<keyword id="KW-0547">Nucleotide-binding</keyword>
<keyword id="KW-0808">Transferase</keyword>
<reference key="1">
    <citation type="journal article" date="2009" name="J. Bacteriol.">
        <title>Genomic sequencing reveals regulatory mutations and recombinational events in the widely used MC4100 lineage of Escherichia coli K-12.</title>
        <authorList>
            <person name="Ferenci T."/>
            <person name="Zhou Z."/>
            <person name="Betteridge T."/>
            <person name="Ren Y."/>
            <person name="Liu Y."/>
            <person name="Feng L."/>
            <person name="Reeves P.R."/>
            <person name="Wang L."/>
        </authorList>
    </citation>
    <scope>NUCLEOTIDE SEQUENCE [LARGE SCALE GENOMIC DNA]</scope>
    <source>
        <strain>K12 / MC4100 / BW2952</strain>
    </source>
</reference>
<dbReference type="EC" id="2.7.1.130" evidence="1"/>
<dbReference type="EMBL" id="CP001396">
    <property type="protein sequence ID" value="ACR63653.1"/>
    <property type="molecule type" value="Genomic_DNA"/>
</dbReference>
<dbReference type="RefSeq" id="WP_000570544.1">
    <property type="nucleotide sequence ID" value="NC_012759.1"/>
</dbReference>
<dbReference type="SMR" id="C4ZQ41"/>
<dbReference type="KEGG" id="ebw:BWG_0767"/>
<dbReference type="HOGENOM" id="CLU_038816_2_0_6"/>
<dbReference type="UniPathway" id="UPA00359">
    <property type="reaction ID" value="UER00482"/>
</dbReference>
<dbReference type="GO" id="GO:0005886">
    <property type="term" value="C:plasma membrane"/>
    <property type="evidence" value="ECO:0007669"/>
    <property type="project" value="TreeGrafter"/>
</dbReference>
<dbReference type="GO" id="GO:0005524">
    <property type="term" value="F:ATP binding"/>
    <property type="evidence" value="ECO:0007669"/>
    <property type="project" value="UniProtKB-UniRule"/>
</dbReference>
<dbReference type="GO" id="GO:0009029">
    <property type="term" value="F:tetraacyldisaccharide 4'-kinase activity"/>
    <property type="evidence" value="ECO:0007669"/>
    <property type="project" value="UniProtKB-UniRule"/>
</dbReference>
<dbReference type="GO" id="GO:0009245">
    <property type="term" value="P:lipid A biosynthetic process"/>
    <property type="evidence" value="ECO:0007669"/>
    <property type="project" value="UniProtKB-UniRule"/>
</dbReference>
<dbReference type="GO" id="GO:0009244">
    <property type="term" value="P:lipopolysaccharide core region biosynthetic process"/>
    <property type="evidence" value="ECO:0007669"/>
    <property type="project" value="TreeGrafter"/>
</dbReference>
<dbReference type="HAMAP" id="MF_00409">
    <property type="entry name" value="LpxK"/>
    <property type="match status" value="1"/>
</dbReference>
<dbReference type="InterPro" id="IPR003758">
    <property type="entry name" value="LpxK"/>
</dbReference>
<dbReference type="InterPro" id="IPR027417">
    <property type="entry name" value="P-loop_NTPase"/>
</dbReference>
<dbReference type="NCBIfam" id="TIGR00682">
    <property type="entry name" value="lpxK"/>
    <property type="match status" value="1"/>
</dbReference>
<dbReference type="PANTHER" id="PTHR42724">
    <property type="entry name" value="TETRAACYLDISACCHARIDE 4'-KINASE"/>
    <property type="match status" value="1"/>
</dbReference>
<dbReference type="PANTHER" id="PTHR42724:SF1">
    <property type="entry name" value="TETRAACYLDISACCHARIDE 4'-KINASE, MITOCHONDRIAL-RELATED"/>
    <property type="match status" value="1"/>
</dbReference>
<dbReference type="Pfam" id="PF02606">
    <property type="entry name" value="LpxK"/>
    <property type="match status" value="1"/>
</dbReference>
<dbReference type="SUPFAM" id="SSF52540">
    <property type="entry name" value="P-loop containing nucleoside triphosphate hydrolases"/>
    <property type="match status" value="1"/>
</dbReference>
<evidence type="ECO:0000255" key="1">
    <source>
        <dbReference type="HAMAP-Rule" id="MF_00409"/>
    </source>
</evidence>